<accession>Q7VP36</accession>
<feature type="chain" id="PRO_0000159789" description="23S rRNA (guanosine-2'-O-)-methyltransferase RlmB">
    <location>
        <begin position="1"/>
        <end position="246"/>
    </location>
</feature>
<feature type="binding site" evidence="1">
    <location>
        <position position="197"/>
    </location>
    <ligand>
        <name>S-adenosyl-L-methionine</name>
        <dbReference type="ChEBI" id="CHEBI:59789"/>
    </ligand>
</feature>
<feature type="binding site" evidence="1">
    <location>
        <position position="217"/>
    </location>
    <ligand>
        <name>S-adenosyl-L-methionine</name>
        <dbReference type="ChEBI" id="CHEBI:59789"/>
    </ligand>
</feature>
<feature type="binding site" evidence="1">
    <location>
        <position position="226"/>
    </location>
    <ligand>
        <name>S-adenosyl-L-methionine</name>
        <dbReference type="ChEBI" id="CHEBI:59789"/>
    </ligand>
</feature>
<comment type="function">
    <text evidence="1">Specifically methylates the ribose of guanosine 2251 in 23S rRNA.</text>
</comment>
<comment type="catalytic activity">
    <reaction evidence="1">
        <text>guanosine(2251) in 23S rRNA + S-adenosyl-L-methionine = 2'-O-methylguanosine(2251) in 23S rRNA + S-adenosyl-L-homocysteine + H(+)</text>
        <dbReference type="Rhea" id="RHEA:24140"/>
        <dbReference type="Rhea" id="RHEA-COMP:10239"/>
        <dbReference type="Rhea" id="RHEA-COMP:10241"/>
        <dbReference type="ChEBI" id="CHEBI:15378"/>
        <dbReference type="ChEBI" id="CHEBI:57856"/>
        <dbReference type="ChEBI" id="CHEBI:59789"/>
        <dbReference type="ChEBI" id="CHEBI:74269"/>
        <dbReference type="ChEBI" id="CHEBI:74445"/>
        <dbReference type="EC" id="2.1.1.185"/>
    </reaction>
</comment>
<comment type="subcellular location">
    <subcellularLocation>
        <location evidence="1">Cytoplasm</location>
    </subcellularLocation>
</comment>
<comment type="similarity">
    <text evidence="1">Belongs to the class IV-like SAM-binding methyltransferase superfamily. RNA methyltransferase TrmH family. RlmB subfamily.</text>
</comment>
<name>RLMB_HAEDU</name>
<evidence type="ECO:0000255" key="1">
    <source>
        <dbReference type="HAMAP-Rule" id="MF_01887"/>
    </source>
</evidence>
<organism>
    <name type="scientific">Haemophilus ducreyi (strain 35000HP / ATCC 700724)</name>
    <dbReference type="NCBI Taxonomy" id="233412"/>
    <lineage>
        <taxon>Bacteria</taxon>
        <taxon>Pseudomonadati</taxon>
        <taxon>Pseudomonadota</taxon>
        <taxon>Gammaproteobacteria</taxon>
        <taxon>Pasteurellales</taxon>
        <taxon>Pasteurellaceae</taxon>
        <taxon>Haemophilus</taxon>
    </lineage>
</organism>
<protein>
    <recommendedName>
        <fullName evidence="1">23S rRNA (guanosine-2'-O-)-methyltransferase RlmB</fullName>
        <ecNumber evidence="1">2.1.1.185</ecNumber>
    </recommendedName>
    <alternativeName>
        <fullName evidence="1">23S rRNA (guanosine2251 2'-O)-methyltransferase</fullName>
    </alternativeName>
    <alternativeName>
        <fullName evidence="1">23S rRNA Gm2251 2'-O-methyltransferase</fullName>
    </alternativeName>
</protein>
<dbReference type="EC" id="2.1.1.185" evidence="1"/>
<dbReference type="EMBL" id="AE017143">
    <property type="protein sequence ID" value="AAP95251.1"/>
    <property type="molecule type" value="Genomic_DNA"/>
</dbReference>
<dbReference type="RefSeq" id="WP_010944304.1">
    <property type="nucleotide sequence ID" value="NC_002940.2"/>
</dbReference>
<dbReference type="SMR" id="Q7VP36"/>
<dbReference type="STRING" id="233412.HD_0270"/>
<dbReference type="KEGG" id="hdu:HD_0270"/>
<dbReference type="eggNOG" id="COG0566">
    <property type="taxonomic scope" value="Bacteria"/>
</dbReference>
<dbReference type="HOGENOM" id="CLU_021322_0_1_6"/>
<dbReference type="OrthoDB" id="9785673at2"/>
<dbReference type="Proteomes" id="UP000001022">
    <property type="component" value="Chromosome"/>
</dbReference>
<dbReference type="GO" id="GO:0005829">
    <property type="term" value="C:cytosol"/>
    <property type="evidence" value="ECO:0007669"/>
    <property type="project" value="TreeGrafter"/>
</dbReference>
<dbReference type="GO" id="GO:0003723">
    <property type="term" value="F:RNA binding"/>
    <property type="evidence" value="ECO:0007669"/>
    <property type="project" value="InterPro"/>
</dbReference>
<dbReference type="GO" id="GO:0070039">
    <property type="term" value="F:rRNA (guanosine-2'-O-)-methyltransferase activity"/>
    <property type="evidence" value="ECO:0007669"/>
    <property type="project" value="UniProtKB-UniRule"/>
</dbReference>
<dbReference type="CDD" id="cd18103">
    <property type="entry name" value="SpoU-like_RlmB"/>
    <property type="match status" value="1"/>
</dbReference>
<dbReference type="FunFam" id="3.40.1280.10:FF:000005">
    <property type="entry name" value="23S rRNA (guanosine-2'-O-)-methyltransferase RlmB"/>
    <property type="match status" value="1"/>
</dbReference>
<dbReference type="Gene3D" id="3.30.1330.30">
    <property type="match status" value="1"/>
</dbReference>
<dbReference type="Gene3D" id="3.40.1280.10">
    <property type="match status" value="1"/>
</dbReference>
<dbReference type="HAMAP" id="MF_01887">
    <property type="entry name" value="23SrRNA_methyltr_B"/>
    <property type="match status" value="1"/>
</dbReference>
<dbReference type="InterPro" id="IPR024915">
    <property type="entry name" value="23S_rRNA_MeTrfase_RlmB"/>
</dbReference>
<dbReference type="InterPro" id="IPR029028">
    <property type="entry name" value="Alpha/beta_knot_MTases"/>
</dbReference>
<dbReference type="InterPro" id="IPR029064">
    <property type="entry name" value="Ribosomal_eL30-like_sf"/>
</dbReference>
<dbReference type="InterPro" id="IPR004441">
    <property type="entry name" value="rRNA_MeTrfase_TrmH"/>
</dbReference>
<dbReference type="InterPro" id="IPR001537">
    <property type="entry name" value="SpoU_MeTrfase"/>
</dbReference>
<dbReference type="InterPro" id="IPR013123">
    <property type="entry name" value="SpoU_subst-bd"/>
</dbReference>
<dbReference type="InterPro" id="IPR029026">
    <property type="entry name" value="tRNA_m1G_MTases_N"/>
</dbReference>
<dbReference type="NCBIfam" id="NF008386">
    <property type="entry name" value="PRK11181.1"/>
    <property type="match status" value="1"/>
</dbReference>
<dbReference type="NCBIfam" id="TIGR00186">
    <property type="entry name" value="rRNA_methyl_3"/>
    <property type="match status" value="1"/>
</dbReference>
<dbReference type="PANTHER" id="PTHR46429">
    <property type="entry name" value="23S RRNA (GUANOSINE-2'-O-)-METHYLTRANSFERASE RLMB"/>
    <property type="match status" value="1"/>
</dbReference>
<dbReference type="PANTHER" id="PTHR46429:SF1">
    <property type="entry name" value="23S RRNA (GUANOSINE-2'-O-)-METHYLTRANSFERASE RLMB"/>
    <property type="match status" value="1"/>
</dbReference>
<dbReference type="Pfam" id="PF00588">
    <property type="entry name" value="SpoU_methylase"/>
    <property type="match status" value="1"/>
</dbReference>
<dbReference type="Pfam" id="PF08032">
    <property type="entry name" value="SpoU_sub_bind"/>
    <property type="match status" value="1"/>
</dbReference>
<dbReference type="SMART" id="SM00967">
    <property type="entry name" value="SpoU_sub_bind"/>
    <property type="match status" value="1"/>
</dbReference>
<dbReference type="SUPFAM" id="SSF75217">
    <property type="entry name" value="alpha/beta knot"/>
    <property type="match status" value="1"/>
</dbReference>
<dbReference type="SUPFAM" id="SSF55315">
    <property type="entry name" value="L30e-like"/>
    <property type="match status" value="1"/>
</dbReference>
<reference key="1">
    <citation type="submission" date="2003-06" db="EMBL/GenBank/DDBJ databases">
        <title>The complete genome sequence of Haemophilus ducreyi.</title>
        <authorList>
            <person name="Munson R.S. Jr."/>
            <person name="Ray W.C."/>
            <person name="Mahairas G."/>
            <person name="Sabo P."/>
            <person name="Mungur R."/>
            <person name="Johnson L."/>
            <person name="Nguyen D."/>
            <person name="Wang J."/>
            <person name="Forst C."/>
            <person name="Hood L."/>
        </authorList>
    </citation>
    <scope>NUCLEOTIDE SEQUENCE [LARGE SCALE GENOMIC DNA]</scope>
    <source>
        <strain>35000HP / ATCC 700724</strain>
    </source>
</reference>
<keyword id="KW-0963">Cytoplasm</keyword>
<keyword id="KW-0489">Methyltransferase</keyword>
<keyword id="KW-1185">Reference proteome</keyword>
<keyword id="KW-0698">rRNA processing</keyword>
<keyword id="KW-0949">S-adenosyl-L-methionine</keyword>
<keyword id="KW-0808">Transferase</keyword>
<gene>
    <name evidence="1" type="primary">rlmB</name>
    <name type="ordered locus">HD_0270</name>
</gene>
<sequence length="246" mass="26833">MSEQIYGIHAVNAFLANAPERLIEVFVLKGREDKRLNPLLDELQRLSISVQQVNRQTLDNKAQGEVHQGIIARIIPQKELNEYDLNELLQHKSNPLLLILDGVTDPHNLGACLRTADAAGVDAVIVPKDKSATLTAIARKVACGAAEAMPLIRVTNLARTMRELQDKHQIWIVGTAGEATTDIYTSQLTGAIALVMGAEGDGMRRLTREHCDQLVSIPMAGSVSSLNVSVATGVCLFEIVRQKLSR</sequence>
<proteinExistence type="inferred from homology"/>